<proteinExistence type="inferred from homology"/>
<name>ARGJ_METMA</name>
<comment type="function">
    <text evidence="1">Catalyzes the transfer of the acetyl group from N(2)-acetylornithine to glutamate, forming N-acetylglutamate and L-ornithine.</text>
</comment>
<comment type="catalytic activity">
    <reaction evidence="1">
        <text>N(2)-acetyl-L-ornithine + L-glutamate = N-acetyl-L-glutamate + L-ornithine</text>
        <dbReference type="Rhea" id="RHEA:15349"/>
        <dbReference type="ChEBI" id="CHEBI:29985"/>
        <dbReference type="ChEBI" id="CHEBI:44337"/>
        <dbReference type="ChEBI" id="CHEBI:46911"/>
        <dbReference type="ChEBI" id="CHEBI:57805"/>
        <dbReference type="EC" id="2.3.1.35"/>
    </reaction>
</comment>
<comment type="pathway">
    <text evidence="1">Amino-acid biosynthesis; L-arginine biosynthesis; L-ornithine and N-acetyl-L-glutamate from L-glutamate and N(2)-acetyl-L-ornithine (cyclic): step 1/1.</text>
</comment>
<comment type="subunit">
    <text evidence="1">Heterotetramer of two alpha and two beta chains.</text>
</comment>
<comment type="subcellular location">
    <subcellularLocation>
        <location evidence="1">Cytoplasm</location>
    </subcellularLocation>
</comment>
<comment type="similarity">
    <text evidence="1">Belongs to the ArgJ family.</text>
</comment>
<comment type="sequence caution" evidence="2">
    <conflict type="erroneous initiation">
        <sequence resource="EMBL-CDS" id="AAM30170"/>
    </conflict>
    <text>Extended N-terminus.</text>
</comment>
<evidence type="ECO:0000255" key="1">
    <source>
        <dbReference type="HAMAP-Rule" id="MF_01106"/>
    </source>
</evidence>
<evidence type="ECO:0000305" key="2"/>
<reference key="1">
    <citation type="journal article" date="2002" name="J. Mol. Microbiol. Biotechnol.">
        <title>The genome of Methanosarcina mazei: evidence for lateral gene transfer between Bacteria and Archaea.</title>
        <authorList>
            <person name="Deppenmeier U."/>
            <person name="Johann A."/>
            <person name="Hartsch T."/>
            <person name="Merkl R."/>
            <person name="Schmitz R.A."/>
            <person name="Martinez-Arias R."/>
            <person name="Henne A."/>
            <person name="Wiezer A."/>
            <person name="Baeumer S."/>
            <person name="Jacobi C."/>
            <person name="Brueggemann H."/>
            <person name="Lienard T."/>
            <person name="Christmann A."/>
            <person name="Boemecke M."/>
            <person name="Steckel S."/>
            <person name="Bhattacharyya A."/>
            <person name="Lykidis A."/>
            <person name="Overbeek R."/>
            <person name="Klenk H.-P."/>
            <person name="Gunsalus R.P."/>
            <person name="Fritz H.-J."/>
            <person name="Gottschalk G."/>
        </authorList>
    </citation>
    <scope>NUCLEOTIDE SEQUENCE [LARGE SCALE GENOMIC DNA]</scope>
    <source>
        <strain>ATCC BAA-159 / DSM 3647 / Goe1 / Go1 / JCM 11833 / OCM 88</strain>
    </source>
</reference>
<feature type="chain" id="PRO_0000002277" description="Glutamate N-acetyltransferase alpha chain" evidence="1">
    <location>
        <begin position="1"/>
        <end position="179"/>
    </location>
</feature>
<feature type="chain" id="PRO_0000002278" description="Glutamate N-acetyltransferase beta chain" evidence="1">
    <location>
        <begin position="180"/>
        <end position="395"/>
    </location>
</feature>
<feature type="active site" description="Nucleophile" evidence="1">
    <location>
        <position position="180"/>
    </location>
</feature>
<feature type="binding site" evidence="1">
    <location>
        <position position="146"/>
    </location>
    <ligand>
        <name>substrate</name>
    </ligand>
</feature>
<feature type="binding site" evidence="1">
    <location>
        <position position="169"/>
    </location>
    <ligand>
        <name>substrate</name>
    </ligand>
</feature>
<feature type="binding site" evidence="1">
    <location>
        <position position="180"/>
    </location>
    <ligand>
        <name>substrate</name>
    </ligand>
</feature>
<feature type="binding site" evidence="1">
    <location>
        <position position="263"/>
    </location>
    <ligand>
        <name>substrate</name>
    </ligand>
</feature>
<feature type="binding site" evidence="1">
    <location>
        <position position="390"/>
    </location>
    <ligand>
        <name>substrate</name>
    </ligand>
</feature>
<feature type="binding site" evidence="1">
    <location>
        <position position="395"/>
    </location>
    <ligand>
        <name>substrate</name>
    </ligand>
</feature>
<feature type="site" description="Involved in the stabilization of negative charge on the oxyanion by the formation of the oxyanion hole" evidence="1">
    <location>
        <position position="107"/>
    </location>
</feature>
<feature type="site" description="Involved in the stabilization of negative charge on the oxyanion by the formation of the oxyanion hole" evidence="1">
    <location>
        <position position="108"/>
    </location>
</feature>
<feature type="site" description="Cleavage; by autolysis" evidence="1">
    <location>
        <begin position="179"/>
        <end position="180"/>
    </location>
</feature>
<sequence>MKQIEGGICAVRGVSAYGIKPGKMGIAVIRAEGPAAGVFTRNKVVAAPVTLSRERIETEHRLSAVIANSGNANAFTGDDGFLDAMEMASMVAENLGLDPDNVAVASTGVIGRRLDVSFIKEHLPEVLEGLGSSPECSRAAAKAIMTTDRALKESAVELDCGVRIGAIAKGSGMIEPNMGTMLCFAYTDAKVPADVLDAALKIAVDKTFNMVVVDGDTSTNDMVLFTSTCKSGVKPCLDCLDDFEEGLVCVFTDLAKKMAKDGEGATKLIEARVTGAKKYEDARLVAKTIVRSPLVKSAIFGKDPNWGRVVAAAGYSGAELEQERLTLSFSGGGEEVELVKAGEISTASDLSLLKKIMANDEIIINLDLAMGEESATAWGCDLTYDYVRINAEYTT</sequence>
<keyword id="KW-0012">Acyltransferase</keyword>
<keyword id="KW-0028">Amino-acid biosynthesis</keyword>
<keyword id="KW-0055">Arginine biosynthesis</keyword>
<keyword id="KW-0068">Autocatalytic cleavage</keyword>
<keyword id="KW-0963">Cytoplasm</keyword>
<keyword id="KW-0808">Transferase</keyword>
<dbReference type="EC" id="2.3.1.35" evidence="1"/>
<dbReference type="EMBL" id="AE008384">
    <property type="protein sequence ID" value="AAM30170.1"/>
    <property type="status" value="ALT_INIT"/>
    <property type="molecule type" value="Genomic_DNA"/>
</dbReference>
<dbReference type="RefSeq" id="WP_015411128.1">
    <property type="nucleotide sequence ID" value="NC_003901.1"/>
</dbReference>
<dbReference type="SMR" id="Q8PZL8"/>
<dbReference type="MEROPS" id="T05.002"/>
<dbReference type="GeneID" id="82159484"/>
<dbReference type="KEGG" id="mma:MM_0474"/>
<dbReference type="PATRIC" id="fig|192952.21.peg.571"/>
<dbReference type="eggNOG" id="arCOG04413">
    <property type="taxonomic scope" value="Archaea"/>
</dbReference>
<dbReference type="HOGENOM" id="CLU_027172_1_0_2"/>
<dbReference type="UniPathway" id="UPA00068">
    <property type="reaction ID" value="UER00111"/>
</dbReference>
<dbReference type="Proteomes" id="UP000000595">
    <property type="component" value="Chromosome"/>
</dbReference>
<dbReference type="GO" id="GO:0005737">
    <property type="term" value="C:cytoplasm"/>
    <property type="evidence" value="ECO:0007669"/>
    <property type="project" value="UniProtKB-SubCell"/>
</dbReference>
<dbReference type="GO" id="GO:0004358">
    <property type="term" value="F:glutamate N-acetyltransferase activity"/>
    <property type="evidence" value="ECO:0007669"/>
    <property type="project" value="UniProtKB-UniRule"/>
</dbReference>
<dbReference type="GO" id="GO:0004042">
    <property type="term" value="F:L-glutamate N-acetyltransferase activity"/>
    <property type="evidence" value="ECO:0007669"/>
    <property type="project" value="UniProtKB-UniRule"/>
</dbReference>
<dbReference type="GO" id="GO:0006526">
    <property type="term" value="P:L-arginine biosynthetic process"/>
    <property type="evidence" value="ECO:0007669"/>
    <property type="project" value="UniProtKB-UniRule"/>
</dbReference>
<dbReference type="GO" id="GO:0006592">
    <property type="term" value="P:ornithine biosynthetic process"/>
    <property type="evidence" value="ECO:0007669"/>
    <property type="project" value="TreeGrafter"/>
</dbReference>
<dbReference type="CDD" id="cd02152">
    <property type="entry name" value="OAT"/>
    <property type="match status" value="1"/>
</dbReference>
<dbReference type="FunFam" id="3.10.20.340:FF:000001">
    <property type="entry name" value="Arginine biosynthesis bifunctional protein ArgJ, chloroplastic"/>
    <property type="match status" value="1"/>
</dbReference>
<dbReference type="FunFam" id="3.60.70.12:FF:000001">
    <property type="entry name" value="Arginine biosynthesis bifunctional protein ArgJ, chloroplastic"/>
    <property type="match status" value="1"/>
</dbReference>
<dbReference type="Gene3D" id="3.10.20.340">
    <property type="entry name" value="ArgJ beta chain, C-terminal domain"/>
    <property type="match status" value="1"/>
</dbReference>
<dbReference type="Gene3D" id="3.60.70.12">
    <property type="entry name" value="L-amino peptidase D-ALA esterase/amidase"/>
    <property type="match status" value="1"/>
</dbReference>
<dbReference type="HAMAP" id="MF_01106">
    <property type="entry name" value="ArgJ"/>
    <property type="match status" value="1"/>
</dbReference>
<dbReference type="InterPro" id="IPR002813">
    <property type="entry name" value="Arg_biosynth_ArgJ"/>
</dbReference>
<dbReference type="InterPro" id="IPR016117">
    <property type="entry name" value="ArgJ-like_dom_sf"/>
</dbReference>
<dbReference type="InterPro" id="IPR042195">
    <property type="entry name" value="ArgJ_beta_C"/>
</dbReference>
<dbReference type="NCBIfam" id="TIGR00120">
    <property type="entry name" value="ArgJ"/>
    <property type="match status" value="1"/>
</dbReference>
<dbReference type="NCBIfam" id="NF003802">
    <property type="entry name" value="PRK05388.1"/>
    <property type="match status" value="1"/>
</dbReference>
<dbReference type="PANTHER" id="PTHR23100">
    <property type="entry name" value="ARGININE BIOSYNTHESIS BIFUNCTIONAL PROTEIN ARGJ"/>
    <property type="match status" value="1"/>
</dbReference>
<dbReference type="PANTHER" id="PTHR23100:SF0">
    <property type="entry name" value="ARGININE BIOSYNTHESIS BIFUNCTIONAL PROTEIN ARGJ, MITOCHONDRIAL"/>
    <property type="match status" value="1"/>
</dbReference>
<dbReference type="Pfam" id="PF01960">
    <property type="entry name" value="ArgJ"/>
    <property type="match status" value="1"/>
</dbReference>
<dbReference type="SUPFAM" id="SSF56266">
    <property type="entry name" value="DmpA/ArgJ-like"/>
    <property type="match status" value="1"/>
</dbReference>
<gene>
    <name evidence="1" type="primary">argJ</name>
    <name type="ordered locus">MM_0474</name>
</gene>
<accession>Q8PZL8</accession>
<organism>
    <name type="scientific">Methanosarcina mazei (strain ATCC BAA-159 / DSM 3647 / Goe1 / Go1 / JCM 11833 / OCM 88)</name>
    <name type="common">Methanosarcina frisia</name>
    <dbReference type="NCBI Taxonomy" id="192952"/>
    <lineage>
        <taxon>Archaea</taxon>
        <taxon>Methanobacteriati</taxon>
        <taxon>Methanobacteriota</taxon>
        <taxon>Stenosarchaea group</taxon>
        <taxon>Methanomicrobia</taxon>
        <taxon>Methanosarcinales</taxon>
        <taxon>Methanosarcinaceae</taxon>
        <taxon>Methanosarcina</taxon>
    </lineage>
</organism>
<protein>
    <recommendedName>
        <fullName evidence="1">Glutamate N-acetyltransferase</fullName>
        <ecNumber evidence="1">2.3.1.35</ecNumber>
    </recommendedName>
    <alternativeName>
        <fullName evidence="1">Ornithine acetyltransferase</fullName>
        <shortName evidence="1">OATase</shortName>
    </alternativeName>
    <alternativeName>
        <fullName evidence="1">Ornithine transacetylase</fullName>
    </alternativeName>
    <component>
        <recommendedName>
            <fullName evidence="1">Glutamate N-acetyltransferase alpha chain</fullName>
        </recommendedName>
    </component>
    <component>
        <recommendedName>
            <fullName evidence="1">Glutamate N-acetyltransferase beta chain</fullName>
        </recommendedName>
    </component>
</protein>